<comment type="function">
    <text evidence="6 8">Part of the SNAPc complex required for the transcription of both RNA polymerase II and III small-nuclear RNA genes. Binds to the proximal sequence element (PSE), a non-TATA-box basal promoter element common to these 2 types of genes. Recruits TBP and BRF2 to the U6 snRNA TATA box.</text>
</comment>
<comment type="subunit">
    <text evidence="5 6 8">Part of the SNAPc complex composed of 5 subunits: SNAPC1, SNAPC2, SNAPC3, SNAPC4 and SNAPC5. SNAPC4 interacts with SNAPC1, SNAPC2, SNAPC5, BRF2 and TBP.</text>
</comment>
<comment type="interaction">
    <interactant intactId="EBI-2801093">
        <id>Q5SXM2</id>
    </interactant>
    <interactant intactId="EBI-11915024">
        <id>Q16533</id>
        <label>SNAPC1</label>
    </interactant>
    <organismsDiffer>false</organismsDiffer>
    <experiments>12</experiments>
</comment>
<comment type="interaction">
    <interactant intactId="EBI-2801093">
        <id>Q5SXM2</id>
    </interactant>
    <interactant intactId="EBI-749483">
        <id>O75971</id>
        <label>SNAPC5</label>
    </interactant>
    <organismsDiffer>false</organismsDiffer>
    <experiments>3</experiments>
</comment>
<comment type="subcellular location">
    <subcellularLocation>
        <location evidence="3">Nucleus</location>
    </subcellularLocation>
</comment>
<comment type="disease" evidence="7">
    <disease id="DI-06759">
        <name>Neurodevelopmental disorder with motor regression, progressive spastic paraplegia, and oromotor dysfunction</name>
        <acronym>NEDRSO</acronym>
        <description>An autosomal recessive disorder characterized by delayed motor development and developmental regression after the first year of life, followed by progressive spasticity with gait alterations, paraparesis, and oromotor dysfunction. Most individuals have cerebral, cerebellar, or basal ganglia volume loss.</description>
        <dbReference type="MIM" id="620515"/>
    </disease>
    <text>The disease is caused by variants affecting the gene represented in this entry.</text>
</comment>
<organism>
    <name type="scientific">Homo sapiens</name>
    <name type="common">Human</name>
    <dbReference type="NCBI Taxonomy" id="9606"/>
    <lineage>
        <taxon>Eukaryota</taxon>
        <taxon>Metazoa</taxon>
        <taxon>Chordata</taxon>
        <taxon>Craniata</taxon>
        <taxon>Vertebrata</taxon>
        <taxon>Euteleostomi</taxon>
        <taxon>Mammalia</taxon>
        <taxon>Eutheria</taxon>
        <taxon>Euarchontoglires</taxon>
        <taxon>Primates</taxon>
        <taxon>Haplorrhini</taxon>
        <taxon>Catarrhini</taxon>
        <taxon>Hominidae</taxon>
        <taxon>Homo</taxon>
    </lineage>
</organism>
<sequence length="1469" mass="159433">MDVDAEREKITQEIKELERILDPGSSGSHVEISESSLESDSEADSLPSEDLDPADPPISEEERWGEASNDEDDPKDKTLPEDPETCLQLNMVYQEVIQEKLAEANLLLAQNREQQEELMRDLAGSKGTKVKDGKSLPPSTYMGHFMKPYFKDKVTGVGPPANEDTREKAAQGIKAFEELLVTKWKNWEKALLRKSVVSDRLQRLLQPKLLKLEYLHQKQSKVSSELERQALEKQGREAEKEIQDINQLPEEALLGNRLDSHDWEKISNINFEGSRSAEEIRKFWQNSEHPSINKQEWSREEEERLQAIAAAHGHLEWQKIAEELGTSRSAFQCLQKFQQHNKALKRKEWTEEEDRMLTQLVQEMRVGSHIPYRRIVYYMEGRDSMQLIYRWTKSLDPGLKKGYWAPEEDAKLLQAVAKYGEQDWFKIREEVPGRSDAQCRDRYLRRLHFSLKKGRWNLKEEEQLIELIEKYGVGHWAKIASELPHRSGSQCLSKWKIMMGKKQGLRRRRRRARHSVRWSSTSSSGSSSGSSGGSSSSSSSSSEEDEPEQAQAGEGDRALLSPQYMVPDMDLWVPARQSTSQPWRGGAGAWLGGPAASLSPPKGSSASQGGSKEASTTAAAPGEETSPVQVPARAHGPVPRSAQASHSADTRPAGAEKQALEGGRRLLTVPVETVLRVLRANTAARSCTQKEQLRQPPLPTSSPGVSSGDSVARSHVQWLRHRATQSGQRRWRHALHRRLLNRRLLLAVTPWVGDVVVPCTQASQRPAVVQTQADGLREQLQQARLASTPVFTLFTQLFHIDTAGCLEVVRERKALPPRLPQAGARDPPVHLLQASSSAQSTPGHLFPNVPAQEASKSASHKGSRRLASSRVERTLPQASLLASTGPRPKPKTVSELLQEKRLQEARAREATRGPVVLPSQLLVSSSVILQPPLPHTPHGRPAPGPTVLNVPLSGPGAPAAAKPGTSGSWQEAGTSAKDKRLSTMQALPLAPVFSEAEGTAPAASQAPALGPGQISVSCPESGLGQSQAPAASRKQGLPEAPPFLPAAPSPTPLPVQPLSLTHIGGPHVATSVPLPVTWVLTAQGLLPVPVPAVVSLPRPAGTPGPAGLLATLLPPLTETRAAQGPRAPALSSSWQPPANMNREPEPSCRTDTPAPPTHALSQSPAEADGSVAFVPGEAQVAREIPEPRTSSHADPPEAEPPWSGRLPAFGGVIPATEPRGTPGSPSGTQEPRGPLGLEKLPLRQPGPEKGALDLEKPPLPQPGPEKGALDLGLLSQEGEAATQQWLGGQRGVRVPLLGSRLPYQPPALCSLRALSGLLLHKKALEHKATSLVVGGEAERPAGALQASLGLVRGQLQDNPAYLLLRARFLAAFTLPALLATLAPQGVRTTLSVPSRVGSESEDEDLLSELELADRDGQPGCTTATCPIQGAPDSGKCSASSCLDTSNDPDDLDVLRTRHARHTRKRRRLV</sequence>
<accession>Q5SXM2</accession>
<accession>Q9Y6P7</accession>
<protein>
    <recommendedName>
        <fullName>snRNA-activating protein complex subunit 4</fullName>
        <shortName>SNAPc subunit 4</shortName>
    </recommendedName>
    <alternativeName>
        <fullName>Proximal sequence element-binding transcription factor subunit alpha</fullName>
        <shortName>PSE-binding factor subunit alpha</shortName>
        <shortName>PTF subunit alpha</shortName>
    </alternativeName>
    <alternativeName>
        <fullName>snRNA-activating protein complex 190 kDa subunit</fullName>
        <shortName>SNAPc 190 kDa subunit</shortName>
    </alternativeName>
</protein>
<keyword id="KW-0002">3D-structure</keyword>
<keyword id="KW-0225">Disease variant</keyword>
<keyword id="KW-0238">DNA-binding</keyword>
<keyword id="KW-0991">Intellectual disability</keyword>
<keyword id="KW-0539">Nucleus</keyword>
<keyword id="KW-0597">Phosphoprotein</keyword>
<keyword id="KW-1267">Proteomics identification</keyword>
<keyword id="KW-1185">Reference proteome</keyword>
<keyword id="KW-0677">Repeat</keyword>
<keyword id="KW-0804">Transcription</keyword>
<keyword id="KW-0805">Transcription regulation</keyword>
<dbReference type="EMBL" id="AF032387">
    <property type="protein sequence ID" value="AAC02972.1"/>
    <property type="molecule type" value="mRNA"/>
</dbReference>
<dbReference type="EMBL" id="AL592301">
    <property type="protein sequence ID" value="CAI13935.1"/>
    <property type="molecule type" value="Genomic_DNA"/>
</dbReference>
<dbReference type="CCDS" id="CCDS6998.1"/>
<dbReference type="PIR" id="T09219">
    <property type="entry name" value="T09219"/>
</dbReference>
<dbReference type="RefSeq" id="NP_001381130.1">
    <property type="nucleotide sequence ID" value="NM_001394201.1"/>
</dbReference>
<dbReference type="RefSeq" id="NP_003077.2">
    <property type="nucleotide sequence ID" value="NM_003086.4"/>
</dbReference>
<dbReference type="RefSeq" id="XP_005266153.1">
    <property type="nucleotide sequence ID" value="XM_005266096.2"/>
</dbReference>
<dbReference type="RefSeq" id="XP_006717304.1">
    <property type="nucleotide sequence ID" value="XM_006717241.2"/>
</dbReference>
<dbReference type="RefSeq" id="XP_006717305.1">
    <property type="nucleotide sequence ID" value="XM_006717242.5"/>
</dbReference>
<dbReference type="PDB" id="7XUR">
    <property type="method" value="EM"/>
    <property type="resolution" value="3.49 A"/>
    <property type="chains" value="A=1-505"/>
</dbReference>
<dbReference type="PDB" id="7ZWC">
    <property type="method" value="EM"/>
    <property type="resolution" value="3.20 A"/>
    <property type="chains" value="c=1-1469"/>
</dbReference>
<dbReference type="PDB" id="7ZWD">
    <property type="method" value="EM"/>
    <property type="resolution" value="3.00 A"/>
    <property type="chains" value="c=1-1469"/>
</dbReference>
<dbReference type="PDB" id="7ZX7">
    <property type="method" value="EM"/>
    <property type="resolution" value="3.40 A"/>
    <property type="chains" value="c=1-1469"/>
</dbReference>
<dbReference type="PDB" id="7ZX8">
    <property type="method" value="EM"/>
    <property type="resolution" value="3.00 A"/>
    <property type="chains" value="c=1-1469"/>
</dbReference>
<dbReference type="PDB" id="7ZXE">
    <property type="method" value="EM"/>
    <property type="resolution" value="3.50 A"/>
    <property type="chains" value="c=1-1469"/>
</dbReference>
<dbReference type="PDB" id="8ITY">
    <property type="method" value="EM"/>
    <property type="resolution" value="3.90 A"/>
    <property type="chains" value="4=1-1469"/>
</dbReference>
<dbReference type="PDB" id="8IUE">
    <property type="method" value="EM"/>
    <property type="resolution" value="4.10 A"/>
    <property type="chains" value="4=1-1469"/>
</dbReference>
<dbReference type="PDB" id="8IUH">
    <property type="method" value="EM"/>
    <property type="resolution" value="3.40 A"/>
    <property type="chains" value="4=1-1469"/>
</dbReference>
<dbReference type="PDB" id="9FSO">
    <property type="method" value="EM"/>
    <property type="resolution" value="3.28 A"/>
    <property type="chains" value="W=2-1469"/>
</dbReference>
<dbReference type="PDB" id="9FSP">
    <property type="method" value="EM"/>
    <property type="resolution" value="3.39 A"/>
    <property type="chains" value="W=2-1469"/>
</dbReference>
<dbReference type="PDB" id="9FSQ">
    <property type="method" value="EM"/>
    <property type="resolution" value="3.51 A"/>
    <property type="chains" value="W=2-1469"/>
</dbReference>
<dbReference type="PDB" id="9FSR">
    <property type="method" value="EM"/>
    <property type="resolution" value="3.76 A"/>
    <property type="chains" value="W=2-1469"/>
</dbReference>
<dbReference type="PDB" id="9FSS">
    <property type="method" value="EM"/>
    <property type="resolution" value="4.14 A"/>
    <property type="chains" value="W=2-1469"/>
</dbReference>
<dbReference type="PDBsum" id="7XUR"/>
<dbReference type="PDBsum" id="7ZWC"/>
<dbReference type="PDBsum" id="7ZWD"/>
<dbReference type="PDBsum" id="7ZX7"/>
<dbReference type="PDBsum" id="7ZX8"/>
<dbReference type="PDBsum" id="7ZXE"/>
<dbReference type="PDBsum" id="8ITY"/>
<dbReference type="PDBsum" id="8IUE"/>
<dbReference type="PDBsum" id="8IUH"/>
<dbReference type="PDBsum" id="9FSO"/>
<dbReference type="PDBsum" id="9FSP"/>
<dbReference type="PDBsum" id="9FSQ"/>
<dbReference type="PDBsum" id="9FSR"/>
<dbReference type="PDBsum" id="9FSS"/>
<dbReference type="EMDB" id="EMD-14996"/>
<dbReference type="EMDB" id="EMD-14997"/>
<dbReference type="EMDB" id="EMD-15006"/>
<dbReference type="EMDB" id="EMD-15007"/>
<dbReference type="EMDB" id="EMD-15009"/>
<dbReference type="EMDB" id="EMD-33477"/>
<dbReference type="EMDB" id="EMD-35712"/>
<dbReference type="EMDB" id="EMD-35719"/>
<dbReference type="EMDB" id="EMD-35722"/>
<dbReference type="EMDB" id="EMD-50730"/>
<dbReference type="EMDB" id="EMD-50731"/>
<dbReference type="EMDB" id="EMD-50732"/>
<dbReference type="EMDB" id="EMD-50733"/>
<dbReference type="EMDB" id="EMD-50734"/>
<dbReference type="SMR" id="Q5SXM2"/>
<dbReference type="BioGRID" id="112505">
    <property type="interactions" value="79"/>
</dbReference>
<dbReference type="ComplexPortal" id="CPX-8637">
    <property type="entry name" value="SNAPc snRNA activating protein complex"/>
</dbReference>
<dbReference type="CORUM" id="Q5SXM2"/>
<dbReference type="FunCoup" id="Q5SXM2">
    <property type="interactions" value="1141"/>
</dbReference>
<dbReference type="IntAct" id="Q5SXM2">
    <property type="interactions" value="77"/>
</dbReference>
<dbReference type="MINT" id="Q5SXM2"/>
<dbReference type="STRING" id="9606.ENSP00000298532"/>
<dbReference type="GlyGen" id="Q5SXM2">
    <property type="glycosylation" value="5 sites, 1 O-linked glycan (1 site)"/>
</dbReference>
<dbReference type="iPTMnet" id="Q5SXM2"/>
<dbReference type="PhosphoSitePlus" id="Q5SXM2"/>
<dbReference type="BioMuta" id="SNAPC4"/>
<dbReference type="DMDM" id="74762223"/>
<dbReference type="jPOST" id="Q5SXM2"/>
<dbReference type="MassIVE" id="Q5SXM2"/>
<dbReference type="PaxDb" id="9606-ENSP00000298532"/>
<dbReference type="PeptideAtlas" id="Q5SXM2"/>
<dbReference type="ProteomicsDB" id="63996"/>
<dbReference type="Pumba" id="Q5SXM2"/>
<dbReference type="Antibodypedia" id="18701">
    <property type="antibodies" value="208 antibodies from 21 providers"/>
</dbReference>
<dbReference type="DNASU" id="6621"/>
<dbReference type="Ensembl" id="ENST00000298532.2">
    <property type="protein sequence ID" value="ENSP00000298532.2"/>
    <property type="gene ID" value="ENSG00000165684.6"/>
</dbReference>
<dbReference type="Ensembl" id="ENST00000637388.2">
    <property type="protein sequence ID" value="ENSP00000490037.2"/>
    <property type="gene ID" value="ENSG00000165684.6"/>
</dbReference>
<dbReference type="Ensembl" id="ENST00000684778.1">
    <property type="protein sequence ID" value="ENSP00000510559.1"/>
    <property type="gene ID" value="ENSG00000165684.6"/>
</dbReference>
<dbReference type="GeneID" id="6621"/>
<dbReference type="KEGG" id="hsa:6621"/>
<dbReference type="MANE-Select" id="ENST00000684778.1">
    <property type="protein sequence ID" value="ENSP00000510559.1"/>
    <property type="RefSeq nucleotide sequence ID" value="NM_003086.4"/>
    <property type="RefSeq protein sequence ID" value="NP_003077.2"/>
</dbReference>
<dbReference type="UCSC" id="uc004chh.4">
    <property type="organism name" value="human"/>
</dbReference>
<dbReference type="AGR" id="HGNC:11137"/>
<dbReference type="CTD" id="6621"/>
<dbReference type="DisGeNET" id="6621"/>
<dbReference type="GeneCards" id="SNAPC4"/>
<dbReference type="HGNC" id="HGNC:11137">
    <property type="gene designation" value="SNAPC4"/>
</dbReference>
<dbReference type="HPA" id="ENSG00000165684">
    <property type="expression patterns" value="Low tissue specificity"/>
</dbReference>
<dbReference type="MalaCards" id="SNAPC4"/>
<dbReference type="MIM" id="602777">
    <property type="type" value="gene"/>
</dbReference>
<dbReference type="MIM" id="620515">
    <property type="type" value="phenotype"/>
</dbReference>
<dbReference type="neXtProt" id="NX_Q5SXM2"/>
<dbReference type="OpenTargets" id="ENSG00000165684"/>
<dbReference type="PharmGKB" id="PA35985"/>
<dbReference type="VEuPathDB" id="HostDB:ENSG00000165684"/>
<dbReference type="eggNOG" id="KOG0049">
    <property type="taxonomic scope" value="Eukaryota"/>
</dbReference>
<dbReference type="GeneTree" id="ENSGT00940000160404"/>
<dbReference type="HOGENOM" id="CLU_004641_0_0_1"/>
<dbReference type="InParanoid" id="Q5SXM2"/>
<dbReference type="OMA" id="MAFHQTK"/>
<dbReference type="OrthoDB" id="2143914at2759"/>
<dbReference type="PAN-GO" id="Q5SXM2">
    <property type="GO annotations" value="6 GO annotations based on evolutionary models"/>
</dbReference>
<dbReference type="PhylomeDB" id="Q5SXM2"/>
<dbReference type="TreeFam" id="TF313064"/>
<dbReference type="PathwayCommons" id="Q5SXM2"/>
<dbReference type="Reactome" id="R-HSA-6807505">
    <property type="pathway name" value="RNA polymerase II transcribes snRNA genes"/>
</dbReference>
<dbReference type="Reactome" id="R-HSA-749476">
    <property type="pathway name" value="RNA Polymerase III Abortive And Retractive Initiation"/>
</dbReference>
<dbReference type="Reactome" id="R-HSA-76071">
    <property type="pathway name" value="RNA Polymerase III Transcription Initiation From Type 3 Promoter"/>
</dbReference>
<dbReference type="SignaLink" id="Q5SXM2"/>
<dbReference type="BioGRID-ORCS" id="6621">
    <property type="hits" value="736 hits in 1178 CRISPR screens"/>
</dbReference>
<dbReference type="CD-CODE" id="A0DCDA94">
    <property type="entry name" value="DNA damage foci"/>
</dbReference>
<dbReference type="ChiTaRS" id="SNAPC4">
    <property type="organism name" value="human"/>
</dbReference>
<dbReference type="GeneWiki" id="SNAPC4"/>
<dbReference type="GenomeRNAi" id="6621"/>
<dbReference type="Pharos" id="Q5SXM2">
    <property type="development level" value="Tbio"/>
</dbReference>
<dbReference type="PRO" id="PR:Q5SXM2"/>
<dbReference type="Proteomes" id="UP000005640">
    <property type="component" value="Chromosome 9"/>
</dbReference>
<dbReference type="RNAct" id="Q5SXM2">
    <property type="molecule type" value="protein"/>
</dbReference>
<dbReference type="Bgee" id="ENSG00000165684">
    <property type="expression patterns" value="Expressed in sural nerve and 163 other cell types or tissues"/>
</dbReference>
<dbReference type="ExpressionAtlas" id="Q5SXM2">
    <property type="expression patterns" value="baseline and differential"/>
</dbReference>
<dbReference type="GO" id="GO:0005654">
    <property type="term" value="C:nucleoplasm"/>
    <property type="evidence" value="ECO:0000304"/>
    <property type="project" value="Reactome"/>
</dbReference>
<dbReference type="GO" id="GO:0005634">
    <property type="term" value="C:nucleus"/>
    <property type="evidence" value="ECO:0000304"/>
    <property type="project" value="ProtInc"/>
</dbReference>
<dbReference type="GO" id="GO:0019185">
    <property type="term" value="C:snRNA-activating protein complex"/>
    <property type="evidence" value="ECO:0000314"/>
    <property type="project" value="UniProtKB"/>
</dbReference>
<dbReference type="GO" id="GO:0003677">
    <property type="term" value="F:DNA binding"/>
    <property type="evidence" value="ECO:0000314"/>
    <property type="project" value="UniProtKB"/>
</dbReference>
<dbReference type="GO" id="GO:0016251">
    <property type="term" value="F:RNA polymerase II general transcription initiation factor activity"/>
    <property type="evidence" value="ECO:0000314"/>
    <property type="project" value="ARUK-UCL"/>
</dbReference>
<dbReference type="GO" id="GO:0000995">
    <property type="term" value="F:RNA polymerase III general transcription initiation factor activity"/>
    <property type="evidence" value="ECO:0000314"/>
    <property type="project" value="ARUK-UCL"/>
</dbReference>
<dbReference type="GO" id="GO:0001006">
    <property type="term" value="F:RNA polymerase III type 3 promoter sequence-specific DNA binding"/>
    <property type="evidence" value="ECO:0000318"/>
    <property type="project" value="GO_Central"/>
</dbReference>
<dbReference type="GO" id="GO:0042795">
    <property type="term" value="P:snRNA transcription by RNA polymerase II"/>
    <property type="evidence" value="ECO:0000314"/>
    <property type="project" value="UniProtKB"/>
</dbReference>
<dbReference type="GO" id="GO:0042796">
    <property type="term" value="P:snRNA transcription by RNA polymerase III"/>
    <property type="evidence" value="ECO:0000314"/>
    <property type="project" value="UniProtKB"/>
</dbReference>
<dbReference type="CDD" id="cd00167">
    <property type="entry name" value="SANT"/>
    <property type="match status" value="2"/>
</dbReference>
<dbReference type="FunFam" id="1.10.10.60:FF:000393">
    <property type="entry name" value="Small nuclear RNA activating complex polypeptide 4"/>
    <property type="match status" value="1"/>
</dbReference>
<dbReference type="FunFam" id="1.10.10.60:FF:000314">
    <property type="entry name" value="Small nuclear RNA-activating complex, polypeptide 4"/>
    <property type="match status" value="1"/>
</dbReference>
<dbReference type="FunFam" id="1.10.10.60:FF:000321">
    <property type="entry name" value="Small nuclear RNA-activating complex, polypeptide 4"/>
    <property type="match status" value="1"/>
</dbReference>
<dbReference type="FunFam" id="1.10.10.60:FF:000016">
    <property type="entry name" value="Transcriptional activator Myb isoform A"/>
    <property type="match status" value="1"/>
</dbReference>
<dbReference type="Gene3D" id="1.10.10.60">
    <property type="entry name" value="Homeodomain-like"/>
    <property type="match status" value="4"/>
</dbReference>
<dbReference type="InterPro" id="IPR009057">
    <property type="entry name" value="Homeodomain-like_sf"/>
</dbReference>
<dbReference type="InterPro" id="IPR051575">
    <property type="entry name" value="Myb-like_DNA-bd"/>
</dbReference>
<dbReference type="InterPro" id="IPR017930">
    <property type="entry name" value="Myb_dom"/>
</dbReference>
<dbReference type="InterPro" id="IPR001005">
    <property type="entry name" value="SANT/Myb"/>
</dbReference>
<dbReference type="InterPro" id="IPR017884">
    <property type="entry name" value="SANT_dom"/>
</dbReference>
<dbReference type="PANTHER" id="PTHR46621">
    <property type="entry name" value="SNRNA-ACTIVATING PROTEIN COMPLEX SUBUNIT 4"/>
    <property type="match status" value="1"/>
</dbReference>
<dbReference type="PANTHER" id="PTHR46621:SF1">
    <property type="entry name" value="SNRNA-ACTIVATING PROTEIN COMPLEX SUBUNIT 4"/>
    <property type="match status" value="1"/>
</dbReference>
<dbReference type="Pfam" id="PF13921">
    <property type="entry name" value="Myb_DNA-bind_6"/>
    <property type="match status" value="2"/>
</dbReference>
<dbReference type="SMART" id="SM00717">
    <property type="entry name" value="SANT"/>
    <property type="match status" value="5"/>
</dbReference>
<dbReference type="SUPFAM" id="SSF46689">
    <property type="entry name" value="Homeodomain-like"/>
    <property type="match status" value="3"/>
</dbReference>
<dbReference type="PROSITE" id="PS51294">
    <property type="entry name" value="HTH_MYB"/>
    <property type="match status" value="3"/>
</dbReference>
<dbReference type="PROSITE" id="PS50090">
    <property type="entry name" value="MYB_LIKE"/>
    <property type="match status" value="2"/>
</dbReference>
<proteinExistence type="evidence at protein level"/>
<name>SNPC4_HUMAN</name>
<evidence type="ECO:0000250" key="1">
    <source>
        <dbReference type="UniProtKB" id="Q8BP86"/>
    </source>
</evidence>
<evidence type="ECO:0000255" key="2">
    <source>
        <dbReference type="PROSITE-ProRule" id="PRU00133"/>
    </source>
</evidence>
<evidence type="ECO:0000255" key="3">
    <source>
        <dbReference type="PROSITE-ProRule" id="PRU00625"/>
    </source>
</evidence>
<evidence type="ECO:0000256" key="4">
    <source>
        <dbReference type="SAM" id="MobiDB-lite"/>
    </source>
</evidence>
<evidence type="ECO:0000269" key="5">
    <source>
    </source>
</evidence>
<evidence type="ECO:0000269" key="6">
    <source>
    </source>
</evidence>
<evidence type="ECO:0000269" key="7">
    <source>
    </source>
</evidence>
<evidence type="ECO:0000269" key="8">
    <source>
    </source>
</evidence>
<evidence type="ECO:0000305" key="9"/>
<evidence type="ECO:0000312" key="10">
    <source>
        <dbReference type="EMBL" id="AAC02972.1"/>
    </source>
</evidence>
<evidence type="ECO:0000312" key="11">
    <source>
        <dbReference type="EMBL" id="CAI13935.1"/>
    </source>
</evidence>
<evidence type="ECO:0000312" key="12">
    <source>
        <dbReference type="HGNC" id="HGNC:11137"/>
    </source>
</evidence>
<evidence type="ECO:0007744" key="13">
    <source>
    </source>
</evidence>
<evidence type="ECO:0007744" key="14">
    <source>
    </source>
</evidence>
<evidence type="ECO:0007744" key="15">
    <source>
    </source>
</evidence>
<evidence type="ECO:0007744" key="16">
    <source>
    </source>
</evidence>
<evidence type="ECO:0007829" key="17">
    <source>
        <dbReference type="PDB" id="7XUR"/>
    </source>
</evidence>
<evidence type="ECO:0007829" key="18">
    <source>
        <dbReference type="PDB" id="7ZWC"/>
    </source>
</evidence>
<evidence type="ECO:0007829" key="19">
    <source>
        <dbReference type="PDB" id="7ZXE"/>
    </source>
</evidence>
<evidence type="ECO:0007829" key="20">
    <source>
        <dbReference type="PDB" id="8IUH"/>
    </source>
</evidence>
<gene>
    <name evidence="11 12" type="primary">SNAPC4</name>
    <name evidence="10" type="synonym">SNAP190</name>
</gene>
<feature type="chain" id="PRO_0000197120" description="snRNA-activating protein complex subunit 4">
    <location>
        <begin position="1"/>
        <end position="1469"/>
    </location>
</feature>
<feature type="domain" description="Myb-like 1" evidence="2">
    <location>
        <begin position="250"/>
        <end position="288"/>
    </location>
</feature>
<feature type="domain" description="HTH myb-type 1" evidence="3">
    <location>
        <begin position="289"/>
        <end position="343"/>
    </location>
</feature>
<feature type="domain" description="Myb-like 2" evidence="2">
    <location>
        <begin position="344"/>
        <end position="395"/>
    </location>
</feature>
<feature type="domain" description="HTH myb-type 2" evidence="3">
    <location>
        <begin position="396"/>
        <end position="451"/>
    </location>
</feature>
<feature type="domain" description="HTH myb-type 3" evidence="3">
    <location>
        <begin position="452"/>
        <end position="503"/>
    </location>
</feature>
<feature type="DNA-binding region" description="H-T-H motif" evidence="3">
    <location>
        <begin position="317"/>
        <end position="341"/>
    </location>
</feature>
<feature type="DNA-binding region" description="H-T-H motif" evidence="3">
    <location>
        <begin position="424"/>
        <end position="447"/>
    </location>
</feature>
<feature type="DNA-binding region" description="H-T-H motif" evidence="3">
    <location>
        <begin position="476"/>
        <end position="499"/>
    </location>
</feature>
<feature type="region of interest" description="Disordered" evidence="4">
    <location>
        <begin position="16"/>
        <end position="82"/>
    </location>
</feature>
<feature type="region of interest" description="SNAPC5-binding" evidence="5">
    <location>
        <begin position="84"/>
        <end position="133"/>
    </location>
</feature>
<feature type="region of interest" description="Disordered" evidence="4">
    <location>
        <begin position="501"/>
        <end position="558"/>
    </location>
</feature>
<feature type="region of interest" description="Disordered" evidence="4">
    <location>
        <begin position="577"/>
        <end position="661"/>
    </location>
</feature>
<feature type="region of interest" description="Disordered" evidence="4">
    <location>
        <begin position="685"/>
        <end position="710"/>
    </location>
</feature>
<feature type="region of interest" description="Disordered" evidence="4">
    <location>
        <begin position="834"/>
        <end position="894"/>
    </location>
</feature>
<feature type="region of interest" description="Disordered" evidence="4">
    <location>
        <begin position="932"/>
        <end position="981"/>
    </location>
</feature>
<feature type="region of interest" description="Disordered" evidence="4">
    <location>
        <begin position="1001"/>
        <end position="1051"/>
    </location>
</feature>
<feature type="region of interest" description="Disordered" evidence="4">
    <location>
        <begin position="1121"/>
        <end position="1167"/>
    </location>
</feature>
<feature type="region of interest" description="Disordered" evidence="4">
    <location>
        <begin position="1184"/>
        <end position="1266"/>
    </location>
</feature>
<feature type="region of interest" description="SNAPC2-binding" evidence="5">
    <location>
        <begin position="1281"/>
        <end position="1393"/>
    </location>
</feature>
<feature type="region of interest" description="Disordered" evidence="4">
    <location>
        <begin position="1430"/>
        <end position="1449"/>
    </location>
</feature>
<feature type="compositionally biased region" description="Low complexity" evidence="4">
    <location>
        <begin position="24"/>
        <end position="36"/>
    </location>
</feature>
<feature type="compositionally biased region" description="Acidic residues" evidence="4">
    <location>
        <begin position="37"/>
        <end position="53"/>
    </location>
</feature>
<feature type="compositionally biased region" description="Basic residues" evidence="4">
    <location>
        <begin position="503"/>
        <end position="516"/>
    </location>
</feature>
<feature type="compositionally biased region" description="Low complexity" evidence="4">
    <location>
        <begin position="519"/>
        <end position="541"/>
    </location>
</feature>
<feature type="compositionally biased region" description="Polar residues" evidence="4">
    <location>
        <begin position="602"/>
        <end position="618"/>
    </location>
</feature>
<feature type="compositionally biased region" description="Pro residues" evidence="4">
    <location>
        <begin position="932"/>
        <end position="944"/>
    </location>
</feature>
<feature type="compositionally biased region" description="Low complexity" evidence="4">
    <location>
        <begin position="951"/>
        <end position="968"/>
    </location>
</feature>
<feature type="compositionally biased region" description="Polar residues" evidence="4">
    <location>
        <begin position="1014"/>
        <end position="1029"/>
    </location>
</feature>
<feature type="compositionally biased region" description="Pro residues" evidence="4">
    <location>
        <begin position="1039"/>
        <end position="1051"/>
    </location>
</feature>
<feature type="compositionally biased region" description="Basic and acidic residues" evidence="4">
    <location>
        <begin position="1184"/>
        <end position="1195"/>
    </location>
</feature>
<feature type="compositionally biased region" description="Polar residues" evidence="4">
    <location>
        <begin position="1436"/>
        <end position="1445"/>
    </location>
</feature>
<feature type="modified residue" description="Phosphoserine" evidence="15 16">
    <location>
        <position position="68"/>
    </location>
</feature>
<feature type="modified residue" description="Phosphoserine" evidence="16">
    <location>
        <position position="599"/>
    </location>
</feature>
<feature type="modified residue" description="Phosphoserine" evidence="16">
    <location>
        <position position="626"/>
    </location>
</feature>
<feature type="modified residue" description="Phosphothreonine" evidence="13">
    <location>
        <position position="1157"/>
    </location>
</feature>
<feature type="modified residue" description="Phosphoserine" evidence="16">
    <location>
        <position position="1224"/>
    </location>
</feature>
<feature type="modified residue" description="Phosphoserine" evidence="14">
    <location>
        <position position="1398"/>
    </location>
</feature>
<feature type="modified residue" description="Phosphoserine" evidence="14">
    <location>
        <position position="1400"/>
    </location>
</feature>
<feature type="modified residue" description="Phosphoserine" evidence="1">
    <location>
        <position position="1440"/>
    </location>
</feature>
<feature type="sequence variant" id="VAR_059455" description="In dbSNP:rs7031489.">
    <original>D</original>
    <variation>N</variation>
    <location>
        <position position="44"/>
    </location>
</feature>
<feature type="sequence variant" id="VAR_089014" description="In NEDRSO; uncertain significance." evidence="7">
    <original>K</original>
    <variation>E</variation>
    <location>
        <position position="185"/>
    </location>
</feature>
<feature type="sequence variant" id="VAR_089015" description="In NEDRSO; uncertain significance." evidence="7">
    <original>D</original>
    <variation>N</variation>
    <location>
        <position position="199"/>
    </location>
</feature>
<feature type="sequence variant" id="VAR_089016" description="In NEDRSO; uncertain significance." evidence="7">
    <original>Q</original>
    <variation>R</variation>
    <location>
        <position position="386"/>
    </location>
</feature>
<feature type="sequence variant" id="VAR_089017" description="In NEDRSO; uncertain significance." evidence="7">
    <original>D</original>
    <variation>N</variation>
    <location>
        <position position="441"/>
    </location>
</feature>
<feature type="sequence variant" id="VAR_089018" description="In NEDRSO; uncertain significance." evidence="7">
    <original>I</original>
    <variation>T</variation>
    <location>
        <position position="479"/>
    </location>
</feature>
<feature type="sequence variant" id="VAR_050193" description="In dbSNP:rs3812571.">
    <original>H</original>
    <variation>Q</variation>
    <location>
        <position position="799"/>
    </location>
</feature>
<feature type="sequence variant" id="VAR_089019" description="In NEDRSO; likely pathogenic." evidence="7">
    <location>
        <begin position="810"/>
        <end position="1469"/>
    </location>
</feature>
<feature type="sequence variant" id="VAR_089020" description="In NEDRSO; uncertain significance." evidence="7">
    <original>G</original>
    <variation>V</variation>
    <location>
        <position position="967"/>
    </location>
</feature>
<feature type="sequence variant" id="VAR_050194" description="In dbSNP:rs3812561.">
    <original>P</original>
    <variation>S</variation>
    <location>
        <position position="1448"/>
    </location>
</feature>
<feature type="mutagenesis site" description="Abolishes SNAPC5 binding in the absence of SNAPC1. Minimal effect on SNAPC5 binding in the presence of SNAPC1." evidence="5">
    <original>Q</original>
    <variation>A</variation>
    <location>
        <position position="94"/>
    </location>
</feature>
<feature type="mutagenesis site" description="Abolishes SNAPC5 binding in the absence of SNAPC1. Minimal effect on SNAPC5 binding in the presence of SNAPC1." evidence="5">
    <original>Q</original>
    <variation>L</variation>
    <location>
        <position position="94"/>
    </location>
</feature>
<feature type="mutagenesis site" description="Abolishes SNAPC5 binding in the absence of SNAPC1. Minimal effect on SNAPC5 binding in the presence of SNAPC1." evidence="5">
    <original>Q</original>
    <variation>L</variation>
    <location>
        <position position="115"/>
    </location>
</feature>
<feature type="mutagenesis site" description="Abolishes SNAPC2-binding." evidence="5">
    <original>L</original>
    <variation>A</variation>
    <location>
        <position position="1314"/>
    </location>
</feature>
<feature type="mutagenesis site" description="Abolishes SNAPC2-binding." evidence="5">
    <original>L</original>
    <variation>A</variation>
    <location>
        <position position="1355"/>
    </location>
</feature>
<feature type="mutagenesis site" description="Abolishes SNAPC2-binding." evidence="5">
    <original>L</original>
    <variation>A</variation>
    <location>
        <position position="1362"/>
    </location>
</feature>
<feature type="mutagenesis site" description="Abolishes SNAPC2-binding." evidence="5">
    <original>L</original>
    <variation>A</variation>
    <location>
        <position position="1364"/>
    </location>
</feature>
<feature type="mutagenesis site" description="Decreased binding to SNAPC2." evidence="5">
    <original>L</original>
    <variation>A</variation>
    <location>
        <position position="1369"/>
    </location>
</feature>
<feature type="sequence conflict" description="In Ref. 1; AAC02972." evidence="9" ref="1">
    <original>A</original>
    <variation>G</variation>
    <location>
        <position position="1046"/>
    </location>
</feature>
<feature type="helix" evidence="18">
    <location>
        <begin position="83"/>
        <end position="122"/>
    </location>
</feature>
<feature type="helix" evidence="18">
    <location>
        <begin position="142"/>
        <end position="144"/>
    </location>
</feature>
<feature type="strand" evidence="17">
    <location>
        <begin position="146"/>
        <end position="149"/>
    </location>
</feature>
<feature type="strand" evidence="18">
    <location>
        <begin position="153"/>
        <end position="155"/>
    </location>
</feature>
<feature type="strand" evidence="20">
    <location>
        <begin position="156"/>
        <end position="158"/>
    </location>
</feature>
<feature type="helix" evidence="18">
    <location>
        <begin position="163"/>
        <end position="170"/>
    </location>
</feature>
<feature type="turn" evidence="18">
    <location>
        <begin position="176"/>
        <end position="178"/>
    </location>
</feature>
<feature type="helix" evidence="18">
    <location>
        <begin position="186"/>
        <end position="220"/>
    </location>
</feature>
<feature type="helix" evidence="18">
    <location>
        <begin position="226"/>
        <end position="246"/>
    </location>
</feature>
<feature type="helix" evidence="18">
    <location>
        <begin position="250"/>
        <end position="254"/>
    </location>
</feature>
<feature type="strand" evidence="19">
    <location>
        <begin position="257"/>
        <end position="259"/>
    </location>
</feature>
<feature type="helix" evidence="18">
    <location>
        <begin position="263"/>
        <end position="266"/>
    </location>
</feature>
<feature type="turn" evidence="18">
    <location>
        <begin position="267"/>
        <end position="270"/>
    </location>
</feature>
<feature type="strand" evidence="18">
    <location>
        <begin position="273"/>
        <end position="275"/>
    </location>
</feature>
<feature type="helix" evidence="18">
    <location>
        <begin position="277"/>
        <end position="286"/>
    </location>
</feature>
<feature type="turn" evidence="17">
    <location>
        <begin position="289"/>
        <end position="291"/>
    </location>
</feature>
<feature type="helix" evidence="18">
    <location>
        <begin position="299"/>
        <end position="312"/>
    </location>
</feature>
<feature type="helix" evidence="18">
    <location>
        <begin position="317"/>
        <end position="323"/>
    </location>
</feature>
<feature type="helix" evidence="18">
    <location>
        <begin position="330"/>
        <end position="339"/>
    </location>
</feature>
<feature type="strand" evidence="18">
    <location>
        <begin position="342"/>
        <end position="345"/>
    </location>
</feature>
<feature type="helix" evidence="18">
    <location>
        <begin position="351"/>
        <end position="364"/>
    </location>
</feature>
<feature type="helix" evidence="18">
    <location>
        <begin position="372"/>
        <end position="376"/>
    </location>
</feature>
<feature type="strand" evidence="18">
    <location>
        <begin position="379"/>
        <end position="381"/>
    </location>
</feature>
<feature type="helix" evidence="18">
    <location>
        <begin position="384"/>
        <end position="393"/>
    </location>
</feature>
<feature type="strand" evidence="19">
    <location>
        <begin position="394"/>
        <end position="396"/>
    </location>
</feature>
<feature type="strand" evidence="17">
    <location>
        <begin position="397"/>
        <end position="399"/>
    </location>
</feature>
<feature type="helix" evidence="20">
    <location>
        <begin position="408"/>
        <end position="411"/>
    </location>
</feature>
<feature type="helix" evidence="20">
    <location>
        <begin position="414"/>
        <end position="418"/>
    </location>
</feature>
<feature type="helix" evidence="20">
    <location>
        <begin position="425"/>
        <end position="428"/>
    </location>
</feature>
<feature type="helix" evidence="20">
    <location>
        <begin position="436"/>
        <end position="447"/>
    </location>
</feature>
<feature type="helix" evidence="20">
    <location>
        <begin position="460"/>
        <end position="467"/>
    </location>
</feature>
<feature type="strand" evidence="20">
    <location>
        <begin position="470"/>
        <end position="472"/>
    </location>
</feature>
<feature type="strand" evidence="20">
    <location>
        <begin position="475"/>
        <end position="477"/>
    </location>
</feature>
<feature type="helix" evidence="20">
    <location>
        <begin position="478"/>
        <end position="481"/>
    </location>
</feature>
<feature type="strand" evidence="20">
    <location>
        <begin position="483"/>
        <end position="485"/>
    </location>
</feature>
<feature type="helix" evidence="20">
    <location>
        <begin position="488"/>
        <end position="501"/>
    </location>
</feature>
<feature type="turn" evidence="20">
    <location>
        <begin position="502"/>
        <end position="504"/>
    </location>
</feature>
<feature type="helix" evidence="20">
    <location>
        <begin position="506"/>
        <end position="509"/>
    </location>
</feature>
<feature type="helix" evidence="20">
    <location>
        <begin position="510"/>
        <end position="512"/>
    </location>
</feature>
<reference evidence="9 10" key="1">
    <citation type="journal article" date="1998" name="Mol. Cell. Biol.">
        <title>The large subunit of basal transcription factor SNAPc is a Myb domain protein that interacts with Oct-1.</title>
        <authorList>
            <person name="Wong M.W."/>
            <person name="Henry R.W."/>
            <person name="Ma B."/>
            <person name="Kobayashi R."/>
            <person name="Klages N."/>
            <person name="Matthias P."/>
            <person name="Strubin M."/>
            <person name="Hernandez N."/>
        </authorList>
    </citation>
    <scope>NUCLEOTIDE SEQUENCE [MRNA]</scope>
    <scope>FUNCTION</scope>
    <scope>INTERACTION WITH SNAPC2</scope>
    <source>
        <tissue evidence="10">Teratocarcinoma</tissue>
    </source>
</reference>
<reference evidence="11" key="2">
    <citation type="journal article" date="2004" name="Nature">
        <title>DNA sequence and analysis of human chromosome 9.</title>
        <authorList>
            <person name="Humphray S.J."/>
            <person name="Oliver K."/>
            <person name="Hunt A.R."/>
            <person name="Plumb R.W."/>
            <person name="Loveland J.E."/>
            <person name="Howe K.L."/>
            <person name="Andrews T.D."/>
            <person name="Searle S."/>
            <person name="Hunt S.E."/>
            <person name="Scott C.E."/>
            <person name="Jones M.C."/>
            <person name="Ainscough R."/>
            <person name="Almeida J.P."/>
            <person name="Ambrose K.D."/>
            <person name="Ashwell R.I.S."/>
            <person name="Babbage A.K."/>
            <person name="Babbage S."/>
            <person name="Bagguley C.L."/>
            <person name="Bailey J."/>
            <person name="Banerjee R."/>
            <person name="Barker D.J."/>
            <person name="Barlow K.F."/>
            <person name="Bates K."/>
            <person name="Beasley H."/>
            <person name="Beasley O."/>
            <person name="Bird C.P."/>
            <person name="Bray-Allen S."/>
            <person name="Brown A.J."/>
            <person name="Brown J.Y."/>
            <person name="Burford D."/>
            <person name="Burrill W."/>
            <person name="Burton J."/>
            <person name="Carder C."/>
            <person name="Carter N.P."/>
            <person name="Chapman J.C."/>
            <person name="Chen Y."/>
            <person name="Clarke G."/>
            <person name="Clark S.Y."/>
            <person name="Clee C.M."/>
            <person name="Clegg S."/>
            <person name="Collier R.E."/>
            <person name="Corby N."/>
            <person name="Crosier M."/>
            <person name="Cummings A.T."/>
            <person name="Davies J."/>
            <person name="Dhami P."/>
            <person name="Dunn M."/>
            <person name="Dutta I."/>
            <person name="Dyer L.W."/>
            <person name="Earthrowl M.E."/>
            <person name="Faulkner L."/>
            <person name="Fleming C.J."/>
            <person name="Frankish A."/>
            <person name="Frankland J.A."/>
            <person name="French L."/>
            <person name="Fricker D.G."/>
            <person name="Garner P."/>
            <person name="Garnett J."/>
            <person name="Ghori J."/>
            <person name="Gilbert J.G.R."/>
            <person name="Glison C."/>
            <person name="Grafham D.V."/>
            <person name="Gribble S."/>
            <person name="Griffiths C."/>
            <person name="Griffiths-Jones S."/>
            <person name="Grocock R."/>
            <person name="Guy J."/>
            <person name="Hall R.E."/>
            <person name="Hammond S."/>
            <person name="Harley J.L."/>
            <person name="Harrison E.S.I."/>
            <person name="Hart E.A."/>
            <person name="Heath P.D."/>
            <person name="Henderson C.D."/>
            <person name="Hopkins B.L."/>
            <person name="Howard P.J."/>
            <person name="Howden P.J."/>
            <person name="Huckle E."/>
            <person name="Johnson C."/>
            <person name="Johnson D."/>
            <person name="Joy A.A."/>
            <person name="Kay M."/>
            <person name="Keenan S."/>
            <person name="Kershaw J.K."/>
            <person name="Kimberley A.M."/>
            <person name="King A."/>
            <person name="Knights A."/>
            <person name="Laird G.K."/>
            <person name="Langford C."/>
            <person name="Lawlor S."/>
            <person name="Leongamornlert D.A."/>
            <person name="Leversha M."/>
            <person name="Lloyd C."/>
            <person name="Lloyd D.M."/>
            <person name="Lovell J."/>
            <person name="Martin S."/>
            <person name="Mashreghi-Mohammadi M."/>
            <person name="Matthews L."/>
            <person name="McLaren S."/>
            <person name="McLay K.E."/>
            <person name="McMurray A."/>
            <person name="Milne S."/>
            <person name="Nickerson T."/>
            <person name="Nisbett J."/>
            <person name="Nordsiek G."/>
            <person name="Pearce A.V."/>
            <person name="Peck A.I."/>
            <person name="Porter K.M."/>
            <person name="Pandian R."/>
            <person name="Pelan S."/>
            <person name="Phillimore B."/>
            <person name="Povey S."/>
            <person name="Ramsey Y."/>
            <person name="Rand V."/>
            <person name="Scharfe M."/>
            <person name="Sehra H.K."/>
            <person name="Shownkeen R."/>
            <person name="Sims S.K."/>
            <person name="Skuce C.D."/>
            <person name="Smith M."/>
            <person name="Steward C.A."/>
            <person name="Swarbreck D."/>
            <person name="Sycamore N."/>
            <person name="Tester J."/>
            <person name="Thorpe A."/>
            <person name="Tracey A."/>
            <person name="Tromans A."/>
            <person name="Thomas D.W."/>
            <person name="Wall M."/>
            <person name="Wallis J.M."/>
            <person name="West A.P."/>
            <person name="Whitehead S.L."/>
            <person name="Willey D.L."/>
            <person name="Williams S.A."/>
            <person name="Wilming L."/>
            <person name="Wray P.W."/>
            <person name="Young L."/>
            <person name="Ashurst J.L."/>
            <person name="Coulson A."/>
            <person name="Blocker H."/>
            <person name="Durbin R.M."/>
            <person name="Sulston J.E."/>
            <person name="Hubbard T."/>
            <person name="Jackson M.J."/>
            <person name="Bentley D.R."/>
            <person name="Beck S."/>
            <person name="Rogers J."/>
            <person name="Dunham I."/>
        </authorList>
    </citation>
    <scope>NUCLEOTIDE SEQUENCE [LARGE SCALE GENOMIC DNA]</scope>
</reference>
<reference evidence="9" key="3">
    <citation type="journal article" date="2001" name="J. Biol. Chem.">
        <title>A map of protein-protein contacts within the small nuclear RNA-activating protein complex SNAPc.</title>
        <authorList>
            <person name="Ma B."/>
            <person name="Hernandez N."/>
        </authorList>
    </citation>
    <scope>INTERACTION WITH SNAPC1; SNAPC2 AND SNAPC5</scope>
    <scope>MUTAGENESIS OF GLN-94; GLN-115; LEU-1314; LEU-1355; LEU-1362; LEU-1364 AND LEU-1369</scope>
</reference>
<reference evidence="9" key="4">
    <citation type="journal article" date="2003" name="J. Biol. Chem.">
        <title>The small nuclear RNA-activating protein 190 Myb DNA binding domain stimulates TATA box-binding protein-TATA box recognition.</title>
        <authorList>
            <person name="Hinkley C.S."/>
            <person name="Hirsch H.A."/>
            <person name="Gu L."/>
            <person name="LaMere B."/>
            <person name="Henry R.W."/>
        </authorList>
    </citation>
    <scope>FUNCTION</scope>
    <scope>INTERACTION WITH TBP AND BRF2</scope>
</reference>
<reference key="5">
    <citation type="journal article" date="2008" name="J. Proteome Res.">
        <title>Combining protein-based IMAC, peptide-based IMAC, and MudPIT for efficient phosphoproteomic analysis.</title>
        <authorList>
            <person name="Cantin G.T."/>
            <person name="Yi W."/>
            <person name="Lu B."/>
            <person name="Park S.K."/>
            <person name="Xu T."/>
            <person name="Lee J.-D."/>
            <person name="Yates J.R. III"/>
        </authorList>
    </citation>
    <scope>PHOSPHORYLATION [LARGE SCALE ANALYSIS] AT THR-1157</scope>
    <scope>IDENTIFICATION BY MASS SPECTROMETRY [LARGE SCALE ANALYSIS]</scope>
    <source>
        <tissue>Cervix carcinoma</tissue>
    </source>
</reference>
<reference key="6">
    <citation type="journal article" date="2008" name="Proc. Natl. Acad. Sci. U.S.A.">
        <title>A quantitative atlas of mitotic phosphorylation.</title>
        <authorList>
            <person name="Dephoure N."/>
            <person name="Zhou C."/>
            <person name="Villen J."/>
            <person name="Beausoleil S.A."/>
            <person name="Bakalarski C.E."/>
            <person name="Elledge S.J."/>
            <person name="Gygi S.P."/>
        </authorList>
    </citation>
    <scope>IDENTIFICATION BY MASS SPECTROMETRY [LARGE SCALE ANALYSIS]</scope>
    <source>
        <tissue>Cervix carcinoma</tissue>
    </source>
</reference>
<reference key="7">
    <citation type="journal article" date="2009" name="Sci. Signal.">
        <title>Quantitative phosphoproteomic analysis of T cell receptor signaling reveals system-wide modulation of protein-protein interactions.</title>
        <authorList>
            <person name="Mayya V."/>
            <person name="Lundgren D.H."/>
            <person name="Hwang S.-I."/>
            <person name="Rezaul K."/>
            <person name="Wu L."/>
            <person name="Eng J.K."/>
            <person name="Rodionov V."/>
            <person name="Han D.K."/>
        </authorList>
    </citation>
    <scope>PHOSPHORYLATION [LARGE SCALE ANALYSIS] AT SER-1398 AND SER-1400</scope>
    <scope>IDENTIFICATION BY MASS SPECTROMETRY [LARGE SCALE ANALYSIS]</scope>
    <source>
        <tissue>Leukemic T-cell</tissue>
    </source>
</reference>
<reference key="8">
    <citation type="journal article" date="2011" name="BMC Syst. Biol.">
        <title>Initial characterization of the human central proteome.</title>
        <authorList>
            <person name="Burkard T.R."/>
            <person name="Planyavsky M."/>
            <person name="Kaupe I."/>
            <person name="Breitwieser F.P."/>
            <person name="Buerckstuemmer T."/>
            <person name="Bennett K.L."/>
            <person name="Superti-Furga G."/>
            <person name="Colinge J."/>
        </authorList>
    </citation>
    <scope>IDENTIFICATION BY MASS SPECTROMETRY [LARGE SCALE ANALYSIS]</scope>
</reference>
<reference key="9">
    <citation type="journal article" date="2011" name="Sci. Signal.">
        <title>System-wide temporal characterization of the proteome and phosphoproteome of human embryonic stem cell differentiation.</title>
        <authorList>
            <person name="Rigbolt K.T."/>
            <person name="Prokhorova T.A."/>
            <person name="Akimov V."/>
            <person name="Henningsen J."/>
            <person name="Johansen P.T."/>
            <person name="Kratchmarova I."/>
            <person name="Kassem M."/>
            <person name="Mann M."/>
            <person name="Olsen J.V."/>
            <person name="Blagoev B."/>
        </authorList>
    </citation>
    <scope>PHOSPHORYLATION [LARGE SCALE ANALYSIS] AT SER-68</scope>
    <scope>IDENTIFICATION BY MASS SPECTROMETRY [LARGE SCALE ANALYSIS]</scope>
</reference>
<reference key="10">
    <citation type="journal article" date="2013" name="J. Proteome Res.">
        <title>Toward a comprehensive characterization of a human cancer cell phosphoproteome.</title>
        <authorList>
            <person name="Zhou H."/>
            <person name="Di Palma S."/>
            <person name="Preisinger C."/>
            <person name="Peng M."/>
            <person name="Polat A.N."/>
            <person name="Heck A.J."/>
            <person name="Mohammed S."/>
        </authorList>
    </citation>
    <scope>PHOSPHORYLATION [LARGE SCALE ANALYSIS] AT SER-68; SER-599; SER-626 AND SER-1224</scope>
    <scope>IDENTIFICATION BY MASS SPECTROMETRY [LARGE SCALE ANALYSIS]</scope>
    <source>
        <tissue>Cervix carcinoma</tissue>
        <tissue>Erythroleukemia</tissue>
    </source>
</reference>
<reference key="11">
    <citation type="journal article" date="2023" name="Am. J. Hum. Genet.">
        <title>Bi-allelic SNAPC4 variants dysregulate global alternative splicing and lead to neuroregression and progressive spastic paraparesis.</title>
        <authorList>
            <consortium name="Undiagnosed Diseases Network"/>
            <person name="Frost F.G."/>
            <person name="Morimoto M."/>
            <person name="Sharma P."/>
            <person name="Ruaud L."/>
            <person name="Belnap N."/>
            <person name="Calame D.G."/>
            <person name="Uchiyama Y."/>
            <person name="Matsumoto N."/>
            <person name="Oud M.M."/>
            <person name="Ferreira E.A."/>
            <person name="Narayanan V."/>
            <person name="Rangasamy S."/>
            <person name="Huentelman M."/>
            <person name="Emrick L.T."/>
            <person name="Sato-Shirai I."/>
            <person name="Kumada S."/>
            <person name="Wolf N.I."/>
            <person name="Steinbach P.J."/>
            <person name="Huang Y."/>
            <person name="Pusey B.N."/>
            <person name="Passemard S."/>
            <person name="Levy J."/>
            <person name="Drunat S."/>
            <person name="Vincent M."/>
            <person name="Guet A."/>
            <person name="Agolini E."/>
            <person name="Novelli A."/>
            <person name="Digilio M.C."/>
            <person name="Rosenfeld J.A."/>
            <person name="Murphy J.L."/>
            <person name="Lupski J.R."/>
            <person name="Vezina G."/>
            <person name="Macnamara E.F."/>
            <person name="Adams D.R."/>
            <person name="Acosta M.T."/>
            <person name="Tifft C.J."/>
            <person name="Gahl W.A."/>
            <person name="Malicdan M.C.V."/>
        </authorList>
    </citation>
    <scope>VARIANTS NEDRSO GLU-185; ASN-199; ARG-386; ASN-441; THR-479; 810-ARG--VAL-1469 DEL AND VAL-967</scope>
    <scope>INVOLVEMENT IN NEDRSO</scope>
</reference>